<organism>
    <name type="scientific">Pseudomonas aeruginosa (strain ATCC 15692 / DSM 22644 / CIP 104116 / JCM 14847 / LMG 12228 / 1C / PRS 101 / PAO1)</name>
    <dbReference type="NCBI Taxonomy" id="208964"/>
    <lineage>
        <taxon>Bacteria</taxon>
        <taxon>Pseudomonadati</taxon>
        <taxon>Pseudomonadota</taxon>
        <taxon>Gammaproteobacteria</taxon>
        <taxon>Pseudomonadales</taxon>
        <taxon>Pseudomonadaceae</taxon>
        <taxon>Pseudomonas</taxon>
    </lineage>
</organism>
<reference key="1">
    <citation type="journal article" date="2000" name="Nature">
        <title>Complete genome sequence of Pseudomonas aeruginosa PAO1, an opportunistic pathogen.</title>
        <authorList>
            <person name="Stover C.K."/>
            <person name="Pham X.-Q.T."/>
            <person name="Erwin A.L."/>
            <person name="Mizoguchi S.D."/>
            <person name="Warrener P."/>
            <person name="Hickey M.J."/>
            <person name="Brinkman F.S.L."/>
            <person name="Hufnagle W.O."/>
            <person name="Kowalik D.J."/>
            <person name="Lagrou M."/>
            <person name="Garber R.L."/>
            <person name="Goltry L."/>
            <person name="Tolentino E."/>
            <person name="Westbrock-Wadman S."/>
            <person name="Yuan Y."/>
            <person name="Brody L.L."/>
            <person name="Coulter S.N."/>
            <person name="Folger K.R."/>
            <person name="Kas A."/>
            <person name="Larbig K."/>
            <person name="Lim R.M."/>
            <person name="Smith K.A."/>
            <person name="Spencer D.H."/>
            <person name="Wong G.K.-S."/>
            <person name="Wu Z."/>
            <person name="Paulsen I.T."/>
            <person name="Reizer J."/>
            <person name="Saier M.H. Jr."/>
            <person name="Hancock R.E.W."/>
            <person name="Lory S."/>
            <person name="Olson M.V."/>
        </authorList>
    </citation>
    <scope>NUCLEOTIDE SEQUENCE [LARGE SCALE GENOMIC DNA]</scope>
    <source>
        <strain>ATCC 15692 / DSM 22644 / CIP 104116 / JCM 14847 / LMG 12228 / 1C / PRS 101 / PAO1</strain>
    </source>
</reference>
<name>LGUL_PSEAE</name>
<protein>
    <recommendedName>
        <fullName>Lactoylglutathione lyase</fullName>
        <ecNumber>4.4.1.5</ecNumber>
    </recommendedName>
    <alternativeName>
        <fullName>Aldoketomutase</fullName>
    </alternativeName>
    <alternativeName>
        <fullName>Glyoxalase I</fullName>
        <shortName>Glx I</shortName>
    </alternativeName>
    <alternativeName>
        <fullName>Ketone-aldehyde mutase</fullName>
    </alternativeName>
    <alternativeName>
        <fullName>Methylglyoxalase</fullName>
    </alternativeName>
    <alternativeName>
        <fullName>S-D-lactoylglutathione methylglyoxal lyase</fullName>
    </alternativeName>
</protein>
<accession>Q9HU72</accession>
<sequence length="176" mass="20215">MSFNTEVQPGICMEPDAITQEYVFNHTMLRVKDPKRSLDFYSRVLGMRLLRRLDFEEGRFSLYFLAMTRGEEVPDAVDERQRYTFGRQSVLELTHNWGSESDDSQYHNGNQDPRGFGHICFSVPDLVAACERFETLGVNFVKPLDRGMKNVAFISDPDGYWVEIVQASLNGEMGRG</sequence>
<keyword id="KW-0456">Lyase</keyword>
<keyword id="KW-0479">Metal-binding</keyword>
<keyword id="KW-0533">Nickel</keyword>
<keyword id="KW-1185">Reference proteome</keyword>
<keyword id="KW-0862">Zinc</keyword>
<gene>
    <name type="primary">gloA</name>
    <name type="ordered locus">PA5111</name>
</gene>
<comment type="function">
    <text evidence="1">Catalyzes the conversion of hemimercaptal, formed from methylglyoxal and glutathione, to S-lactoylglutathione.</text>
</comment>
<comment type="catalytic activity">
    <reaction>
        <text>(R)-S-lactoylglutathione = methylglyoxal + glutathione</text>
        <dbReference type="Rhea" id="RHEA:19069"/>
        <dbReference type="ChEBI" id="CHEBI:17158"/>
        <dbReference type="ChEBI" id="CHEBI:57474"/>
        <dbReference type="ChEBI" id="CHEBI:57925"/>
        <dbReference type="EC" id="4.4.1.5"/>
    </reaction>
</comment>
<comment type="cofactor">
    <cofactor evidence="1">
        <name>Ni(2+)</name>
        <dbReference type="ChEBI" id="CHEBI:49786"/>
    </cofactor>
    <cofactor evidence="1">
        <name>Zn(2+)</name>
        <dbReference type="ChEBI" id="CHEBI:29105"/>
    </cofactor>
    <text evidence="1">Binds 1 nickel or zinc ion per subunit.</text>
</comment>
<comment type="pathway">
    <text>Secondary metabolite metabolism; methylglyoxal degradation; (R)-lactate from methylglyoxal: step 1/2.</text>
</comment>
<comment type="subunit">
    <text evidence="1">Monomer.</text>
</comment>
<comment type="similarity">
    <text evidence="3">Belongs to the glyoxalase I family.</text>
</comment>
<feature type="chain" id="PRO_0000287775" description="Lactoylglutathione lyase">
    <location>
        <begin position="1"/>
        <end position="176"/>
    </location>
</feature>
<feature type="domain" description="VOC" evidence="2">
    <location>
        <begin position="23"/>
        <end position="167"/>
    </location>
</feature>
<feature type="active site" description="Proton donor/acceptor" evidence="1">
    <location>
        <position position="163"/>
    </location>
</feature>
<feature type="binding site" evidence="1">
    <location>
        <position position="26"/>
    </location>
    <ligand>
        <name>Ni(2+)</name>
        <dbReference type="ChEBI" id="CHEBI:49786"/>
    </ligand>
</feature>
<feature type="binding site" evidence="1">
    <location>
        <position position="30"/>
    </location>
    <ligand>
        <name>substrate</name>
    </ligand>
</feature>
<feature type="binding site" evidence="1">
    <location>
        <position position="92"/>
    </location>
    <ligand>
        <name>Ni(2+)</name>
        <dbReference type="ChEBI" id="CHEBI:49786"/>
    </ligand>
</feature>
<feature type="binding site" evidence="1">
    <location>
        <position position="96"/>
    </location>
    <ligand>
        <name>substrate</name>
    </ligand>
</feature>
<feature type="binding site" evidence="1">
    <location>
        <position position="114"/>
    </location>
    <ligand>
        <name>substrate</name>
    </ligand>
</feature>
<feature type="binding site" evidence="1">
    <location>
        <position position="118"/>
    </location>
    <ligand>
        <name>Ni(2+)</name>
        <dbReference type="ChEBI" id="CHEBI:49786"/>
    </ligand>
</feature>
<feature type="binding site" evidence="1">
    <location>
        <position position="118"/>
    </location>
    <ligand>
        <name>substrate</name>
    </ligand>
</feature>
<feature type="binding site" evidence="1">
    <location>
        <position position="163"/>
    </location>
    <ligand>
        <name>Ni(2+)</name>
        <dbReference type="ChEBI" id="CHEBI:49786"/>
    </ligand>
</feature>
<proteinExistence type="inferred from homology"/>
<evidence type="ECO:0000250" key="1"/>
<evidence type="ECO:0000255" key="2">
    <source>
        <dbReference type="PROSITE-ProRule" id="PRU01163"/>
    </source>
</evidence>
<evidence type="ECO:0000305" key="3"/>
<dbReference type="EC" id="4.4.1.5"/>
<dbReference type="EMBL" id="AE004091">
    <property type="protein sequence ID" value="AAG08496.1"/>
    <property type="molecule type" value="Genomic_DNA"/>
</dbReference>
<dbReference type="PIR" id="F83006">
    <property type="entry name" value="F83006"/>
</dbReference>
<dbReference type="RefSeq" id="WP_003101793.1">
    <property type="nucleotide sequence ID" value="NZ_QZGE01000002.1"/>
</dbReference>
<dbReference type="SMR" id="Q9HU72"/>
<dbReference type="STRING" id="208964.PA5111"/>
<dbReference type="PaxDb" id="208964-PA5111"/>
<dbReference type="DNASU" id="882241"/>
<dbReference type="KEGG" id="pae:PA5111"/>
<dbReference type="PATRIC" id="fig|208964.12.peg.5356"/>
<dbReference type="PseudoCAP" id="PA5111"/>
<dbReference type="HOGENOM" id="CLU_046006_1_1_6"/>
<dbReference type="InParanoid" id="Q9HU72"/>
<dbReference type="OrthoDB" id="9789841at2"/>
<dbReference type="PhylomeDB" id="Q9HU72"/>
<dbReference type="BioCyc" id="PAER208964:G1FZ6-5226-MONOMER"/>
<dbReference type="BRENDA" id="4.4.1.5">
    <property type="organism ID" value="5087"/>
</dbReference>
<dbReference type="SABIO-RK" id="Q9HU72"/>
<dbReference type="UniPathway" id="UPA00619">
    <property type="reaction ID" value="UER00675"/>
</dbReference>
<dbReference type="Proteomes" id="UP000002438">
    <property type="component" value="Chromosome"/>
</dbReference>
<dbReference type="GO" id="GO:0004462">
    <property type="term" value="F:lactoylglutathione lyase activity"/>
    <property type="evidence" value="ECO:0000314"/>
    <property type="project" value="PseudoCAP"/>
</dbReference>
<dbReference type="GO" id="GO:0008270">
    <property type="term" value="F:zinc ion binding"/>
    <property type="evidence" value="ECO:0000314"/>
    <property type="project" value="PseudoCAP"/>
</dbReference>
<dbReference type="GO" id="GO:0019243">
    <property type="term" value="P:methylglyoxal catabolic process to D-lactate via S-lactoyl-glutathione"/>
    <property type="evidence" value="ECO:0000314"/>
    <property type="project" value="PseudoCAP"/>
</dbReference>
<dbReference type="CDD" id="cd07233">
    <property type="entry name" value="GlxI_Zn"/>
    <property type="match status" value="1"/>
</dbReference>
<dbReference type="Gene3D" id="3.10.180.10">
    <property type="entry name" value="2,3-Dihydroxybiphenyl 1,2-Dioxygenase, domain 1"/>
    <property type="match status" value="1"/>
</dbReference>
<dbReference type="InterPro" id="IPR029068">
    <property type="entry name" value="Glyas_Bleomycin-R_OHBP_Dase"/>
</dbReference>
<dbReference type="InterPro" id="IPR004360">
    <property type="entry name" value="Glyas_Fos-R_dOase_dom"/>
</dbReference>
<dbReference type="InterPro" id="IPR004361">
    <property type="entry name" value="Glyoxalase_1"/>
</dbReference>
<dbReference type="InterPro" id="IPR018146">
    <property type="entry name" value="Glyoxalase_1_CS"/>
</dbReference>
<dbReference type="InterPro" id="IPR037523">
    <property type="entry name" value="VOC"/>
</dbReference>
<dbReference type="NCBIfam" id="TIGR00068">
    <property type="entry name" value="glyox_I"/>
    <property type="match status" value="1"/>
</dbReference>
<dbReference type="PANTHER" id="PTHR10374:SF30">
    <property type="entry name" value="LACTOYLGLUTATHIONE LYASE"/>
    <property type="match status" value="1"/>
</dbReference>
<dbReference type="PANTHER" id="PTHR10374">
    <property type="entry name" value="LACTOYLGLUTATHIONE LYASE GLYOXALASE I"/>
    <property type="match status" value="1"/>
</dbReference>
<dbReference type="Pfam" id="PF00903">
    <property type="entry name" value="Glyoxalase"/>
    <property type="match status" value="1"/>
</dbReference>
<dbReference type="SUPFAM" id="SSF54593">
    <property type="entry name" value="Glyoxalase/Bleomycin resistance protein/Dihydroxybiphenyl dioxygenase"/>
    <property type="match status" value="1"/>
</dbReference>
<dbReference type="PROSITE" id="PS00934">
    <property type="entry name" value="GLYOXALASE_I_1"/>
    <property type="match status" value="1"/>
</dbReference>
<dbReference type="PROSITE" id="PS00935">
    <property type="entry name" value="GLYOXALASE_I_2"/>
    <property type="match status" value="1"/>
</dbReference>
<dbReference type="PROSITE" id="PS51819">
    <property type="entry name" value="VOC"/>
    <property type="match status" value="1"/>
</dbReference>